<accession>Q7W8H4</accession>
<feature type="chain" id="PRO_0000220117" description="Thiopurine S-methyltransferase">
    <location>
        <begin position="1"/>
        <end position="219"/>
    </location>
</feature>
<feature type="binding site" evidence="1">
    <location>
        <position position="10"/>
    </location>
    <ligand>
        <name>S-adenosyl-L-methionine</name>
        <dbReference type="ChEBI" id="CHEBI:59789"/>
    </ligand>
</feature>
<feature type="binding site" evidence="1">
    <location>
        <position position="45"/>
    </location>
    <ligand>
        <name>S-adenosyl-L-methionine</name>
        <dbReference type="ChEBI" id="CHEBI:59789"/>
    </ligand>
</feature>
<feature type="binding site" evidence="1">
    <location>
        <position position="66"/>
    </location>
    <ligand>
        <name>S-adenosyl-L-methionine</name>
        <dbReference type="ChEBI" id="CHEBI:59789"/>
    </ligand>
</feature>
<feature type="binding site" evidence="1">
    <location>
        <position position="123"/>
    </location>
    <ligand>
        <name>S-adenosyl-L-methionine</name>
        <dbReference type="ChEBI" id="CHEBI:59789"/>
    </ligand>
</feature>
<comment type="catalytic activity">
    <reaction evidence="1">
        <text>S-adenosyl-L-methionine + a thiopurine = S-adenosyl-L-homocysteine + a thiopurine S-methylether.</text>
        <dbReference type="EC" id="2.1.1.67"/>
    </reaction>
</comment>
<comment type="subcellular location">
    <subcellularLocation>
        <location evidence="1">Cytoplasm</location>
    </subcellularLocation>
</comment>
<comment type="similarity">
    <text evidence="1">Belongs to the class I-like SAM-binding methyltransferase superfamily. TPMT family.</text>
</comment>
<sequence length="219" mass="24658">MDADFWLDRWREGRTHFHQTRVTPLLQKYWPALDVPAGGQVLVPLAGKSLDMVWLAGQGLRVLGVELSQLAVEQFFDENGLRPEIHQSAQGRHYVAGNLELICGDVFALEDATLAACAGVYDRAALVALPEPMRKRYAREVYGRLGRGCRGILITLDYPQDQMEGPPFSVDDAEVQALYAGHTEARLIDRRDILDKEPKFNQRGVARLDTLVYRLERLG</sequence>
<protein>
    <recommendedName>
        <fullName evidence="1">Thiopurine S-methyltransferase</fullName>
        <ecNumber evidence="1">2.1.1.67</ecNumber>
    </recommendedName>
    <alternativeName>
        <fullName evidence="1">Thiopurine methyltransferase</fullName>
    </alternativeName>
</protein>
<proteinExistence type="inferred from homology"/>
<keyword id="KW-0963">Cytoplasm</keyword>
<keyword id="KW-0489">Methyltransferase</keyword>
<keyword id="KW-0949">S-adenosyl-L-methionine</keyword>
<keyword id="KW-0808">Transferase</keyword>
<gene>
    <name evidence="1" type="primary">tpm</name>
    <name type="ordered locus">BPP2160</name>
</gene>
<dbReference type="EC" id="2.1.1.67" evidence="1"/>
<dbReference type="EMBL" id="BX640429">
    <property type="protein sequence ID" value="CAE37460.1"/>
    <property type="molecule type" value="Genomic_DNA"/>
</dbReference>
<dbReference type="RefSeq" id="WP_003809767.1">
    <property type="nucleotide sequence ID" value="NC_002928.3"/>
</dbReference>
<dbReference type="SMR" id="Q7W8H4"/>
<dbReference type="KEGG" id="bpa:BPP2160"/>
<dbReference type="HOGENOM" id="CLU_085515_1_0_4"/>
<dbReference type="Proteomes" id="UP000001421">
    <property type="component" value="Chromosome"/>
</dbReference>
<dbReference type="GO" id="GO:0005737">
    <property type="term" value="C:cytoplasm"/>
    <property type="evidence" value="ECO:0007669"/>
    <property type="project" value="UniProtKB-SubCell"/>
</dbReference>
<dbReference type="GO" id="GO:0008119">
    <property type="term" value="F:thiopurine S-methyltransferase activity"/>
    <property type="evidence" value="ECO:0007669"/>
    <property type="project" value="UniProtKB-UniRule"/>
</dbReference>
<dbReference type="GO" id="GO:0032259">
    <property type="term" value="P:methylation"/>
    <property type="evidence" value="ECO:0007669"/>
    <property type="project" value="UniProtKB-KW"/>
</dbReference>
<dbReference type="GO" id="GO:0010038">
    <property type="term" value="P:response to metal ion"/>
    <property type="evidence" value="ECO:0007669"/>
    <property type="project" value="InterPro"/>
</dbReference>
<dbReference type="FunFam" id="3.40.50.150:FF:000101">
    <property type="entry name" value="Thiopurine S-methyltransferase"/>
    <property type="match status" value="1"/>
</dbReference>
<dbReference type="Gene3D" id="3.40.50.150">
    <property type="entry name" value="Vaccinia Virus protein VP39"/>
    <property type="match status" value="1"/>
</dbReference>
<dbReference type="HAMAP" id="MF_00812">
    <property type="entry name" value="Thiopur_methtran"/>
    <property type="match status" value="1"/>
</dbReference>
<dbReference type="InterPro" id="IPR029063">
    <property type="entry name" value="SAM-dependent_MTases_sf"/>
</dbReference>
<dbReference type="InterPro" id="IPR022474">
    <property type="entry name" value="Thiopur_S-MeTfrase_Se/Te_detox"/>
</dbReference>
<dbReference type="InterPro" id="IPR025835">
    <property type="entry name" value="Thiopurine_S-MeTrfase"/>
</dbReference>
<dbReference type="InterPro" id="IPR008854">
    <property type="entry name" value="TPMT"/>
</dbReference>
<dbReference type="NCBIfam" id="NF009732">
    <property type="entry name" value="PRK13255.1"/>
    <property type="match status" value="1"/>
</dbReference>
<dbReference type="NCBIfam" id="TIGR03840">
    <property type="entry name" value="TMPT_Se_Te"/>
    <property type="match status" value="1"/>
</dbReference>
<dbReference type="PANTHER" id="PTHR10259">
    <property type="entry name" value="THIOPURINE S-METHYLTRANSFERASE"/>
    <property type="match status" value="1"/>
</dbReference>
<dbReference type="PANTHER" id="PTHR10259:SF11">
    <property type="entry name" value="THIOPURINE S-METHYLTRANSFERASE"/>
    <property type="match status" value="1"/>
</dbReference>
<dbReference type="Pfam" id="PF05724">
    <property type="entry name" value="TPMT"/>
    <property type="match status" value="1"/>
</dbReference>
<dbReference type="PIRSF" id="PIRSF023956">
    <property type="entry name" value="Thiopurine_S-methyltransferase"/>
    <property type="match status" value="1"/>
</dbReference>
<dbReference type="SUPFAM" id="SSF53335">
    <property type="entry name" value="S-adenosyl-L-methionine-dependent methyltransferases"/>
    <property type="match status" value="1"/>
</dbReference>
<dbReference type="PROSITE" id="PS51585">
    <property type="entry name" value="SAM_MT_TPMT"/>
    <property type="match status" value="1"/>
</dbReference>
<evidence type="ECO:0000255" key="1">
    <source>
        <dbReference type="HAMAP-Rule" id="MF_00812"/>
    </source>
</evidence>
<name>TPMT_BORPA</name>
<organism>
    <name type="scientific">Bordetella parapertussis (strain 12822 / ATCC BAA-587 / NCTC 13253)</name>
    <dbReference type="NCBI Taxonomy" id="257311"/>
    <lineage>
        <taxon>Bacteria</taxon>
        <taxon>Pseudomonadati</taxon>
        <taxon>Pseudomonadota</taxon>
        <taxon>Betaproteobacteria</taxon>
        <taxon>Burkholderiales</taxon>
        <taxon>Alcaligenaceae</taxon>
        <taxon>Bordetella</taxon>
    </lineage>
</organism>
<reference key="1">
    <citation type="journal article" date="2003" name="Nat. Genet.">
        <title>Comparative analysis of the genome sequences of Bordetella pertussis, Bordetella parapertussis and Bordetella bronchiseptica.</title>
        <authorList>
            <person name="Parkhill J."/>
            <person name="Sebaihia M."/>
            <person name="Preston A."/>
            <person name="Murphy L.D."/>
            <person name="Thomson N.R."/>
            <person name="Harris D.E."/>
            <person name="Holden M.T.G."/>
            <person name="Churcher C.M."/>
            <person name="Bentley S.D."/>
            <person name="Mungall K.L."/>
            <person name="Cerdeno-Tarraga A.-M."/>
            <person name="Temple L."/>
            <person name="James K.D."/>
            <person name="Harris B."/>
            <person name="Quail M.A."/>
            <person name="Achtman M."/>
            <person name="Atkin R."/>
            <person name="Baker S."/>
            <person name="Basham D."/>
            <person name="Bason N."/>
            <person name="Cherevach I."/>
            <person name="Chillingworth T."/>
            <person name="Collins M."/>
            <person name="Cronin A."/>
            <person name="Davis P."/>
            <person name="Doggett J."/>
            <person name="Feltwell T."/>
            <person name="Goble A."/>
            <person name="Hamlin N."/>
            <person name="Hauser H."/>
            <person name="Holroyd S."/>
            <person name="Jagels K."/>
            <person name="Leather S."/>
            <person name="Moule S."/>
            <person name="Norberczak H."/>
            <person name="O'Neil S."/>
            <person name="Ormond D."/>
            <person name="Price C."/>
            <person name="Rabbinowitsch E."/>
            <person name="Rutter S."/>
            <person name="Sanders M."/>
            <person name="Saunders D."/>
            <person name="Seeger K."/>
            <person name="Sharp S."/>
            <person name="Simmonds M."/>
            <person name="Skelton J."/>
            <person name="Squares R."/>
            <person name="Squares S."/>
            <person name="Stevens K."/>
            <person name="Unwin L."/>
            <person name="Whitehead S."/>
            <person name="Barrell B.G."/>
            <person name="Maskell D.J."/>
        </authorList>
    </citation>
    <scope>NUCLEOTIDE SEQUENCE [LARGE SCALE GENOMIC DNA]</scope>
    <source>
        <strain>12822 / ATCC BAA-587 / NCTC 13253</strain>
    </source>
</reference>